<keyword id="KW-0963">Cytoplasm</keyword>
<keyword id="KW-0227">DNA damage</keyword>
<keyword id="KW-0234">DNA repair</keyword>
<keyword id="KW-0255">Endonuclease</keyword>
<keyword id="KW-0378">Hydrolase</keyword>
<keyword id="KW-0460">Magnesium</keyword>
<keyword id="KW-0479">Metal-binding</keyword>
<keyword id="KW-0540">Nuclease</keyword>
<proteinExistence type="inferred from homology"/>
<protein>
    <recommendedName>
        <fullName evidence="1">Endonuclease V</fullName>
        <ecNumber evidence="1">3.1.21.7</ecNumber>
    </recommendedName>
    <alternativeName>
        <fullName evidence="1">Deoxyinosine 3'endonuclease</fullName>
    </alternativeName>
    <alternativeName>
        <fullName evidence="1">Deoxyribonuclease V</fullName>
        <shortName evidence="1">DNase V</shortName>
    </alternativeName>
</protein>
<evidence type="ECO:0000255" key="1">
    <source>
        <dbReference type="HAMAP-Rule" id="MF_00801"/>
    </source>
</evidence>
<reference key="1">
    <citation type="journal article" date="2004" name="Proc. Natl. Acad. Sci. U.S.A.">
        <title>Insights into the evolution of Yersinia pestis through whole-genome comparison with Yersinia pseudotuberculosis.</title>
        <authorList>
            <person name="Chain P.S.G."/>
            <person name="Carniel E."/>
            <person name="Larimer F.W."/>
            <person name="Lamerdin J."/>
            <person name="Stoutland P.O."/>
            <person name="Regala W.M."/>
            <person name="Georgescu A.M."/>
            <person name="Vergez L.M."/>
            <person name="Land M.L."/>
            <person name="Motin V.L."/>
            <person name="Brubaker R.R."/>
            <person name="Fowler J."/>
            <person name="Hinnebusch J."/>
            <person name="Marceau M."/>
            <person name="Medigue C."/>
            <person name="Simonet M."/>
            <person name="Chenal-Francisque V."/>
            <person name="Souza B."/>
            <person name="Dacheux D."/>
            <person name="Elliott J.M."/>
            <person name="Derbise A."/>
            <person name="Hauser L.J."/>
            <person name="Garcia E."/>
        </authorList>
    </citation>
    <scope>NUCLEOTIDE SEQUENCE [LARGE SCALE GENOMIC DNA]</scope>
    <source>
        <strain>IP32953</strain>
    </source>
</reference>
<sequence length="234" mass="26304">MFDTKALQAEQRQRASEISLHDGIDNQFVRFIAGADVGFEQHGEITRAAIAILRYPSLALVEYQVARVATSLPYIPGLLSFREYPALLAAWAQLQQRPDLILVDGQGIAHPRRLGVASHFGLLVDVPTIGVAKSRLCGDFLPLHQDVGAVQPLFDNDEQLGWVWRSKIRCNPLFISPGHRVSVGSALAWVQRCMAGYRLPEPTRWADAIASNRPQFQRWLRKNPDFLGKRRDMI</sequence>
<gene>
    <name evidence="1" type="primary">nfi</name>
    <name type="ordered locus">YPTB0295</name>
</gene>
<name>NFI_YERPS</name>
<organism>
    <name type="scientific">Yersinia pseudotuberculosis serotype I (strain IP32953)</name>
    <dbReference type="NCBI Taxonomy" id="273123"/>
    <lineage>
        <taxon>Bacteria</taxon>
        <taxon>Pseudomonadati</taxon>
        <taxon>Pseudomonadota</taxon>
        <taxon>Gammaproteobacteria</taxon>
        <taxon>Enterobacterales</taxon>
        <taxon>Yersiniaceae</taxon>
        <taxon>Yersinia</taxon>
    </lineage>
</organism>
<feature type="chain" id="PRO_0000159682" description="Endonuclease V">
    <location>
        <begin position="1"/>
        <end position="234"/>
    </location>
</feature>
<feature type="binding site" evidence="1">
    <location>
        <position position="36"/>
    </location>
    <ligand>
        <name>Mg(2+)</name>
        <dbReference type="ChEBI" id="CHEBI:18420"/>
    </ligand>
</feature>
<feature type="binding site" evidence="1">
    <location>
        <position position="104"/>
    </location>
    <ligand>
        <name>Mg(2+)</name>
        <dbReference type="ChEBI" id="CHEBI:18420"/>
    </ligand>
</feature>
<feature type="site" description="Interaction with target DNA" evidence="1">
    <location>
        <position position="74"/>
    </location>
</feature>
<comment type="function">
    <text evidence="1">DNA repair enzyme involved in the repair of deaminated bases. Selectively cleaves double-stranded DNA at the second phosphodiester bond 3' to a deoxyinosine leaving behind the intact lesion on the nicked DNA.</text>
</comment>
<comment type="catalytic activity">
    <reaction evidence="1">
        <text>Endonucleolytic cleavage at apurinic or apyrimidinic sites to products with a 5'-phosphate.</text>
        <dbReference type="EC" id="3.1.21.7"/>
    </reaction>
</comment>
<comment type="cofactor">
    <cofactor evidence="1">
        <name>Mg(2+)</name>
        <dbReference type="ChEBI" id="CHEBI:18420"/>
    </cofactor>
</comment>
<comment type="subcellular location">
    <subcellularLocation>
        <location evidence="1">Cytoplasm</location>
    </subcellularLocation>
</comment>
<comment type="similarity">
    <text evidence="1">Belongs to the endonuclease V family.</text>
</comment>
<accession>Q66FP0</accession>
<dbReference type="EC" id="3.1.21.7" evidence="1"/>
<dbReference type="EMBL" id="BX936398">
    <property type="protein sequence ID" value="CAH19535.1"/>
    <property type="molecule type" value="Genomic_DNA"/>
</dbReference>
<dbReference type="RefSeq" id="WP_011191556.1">
    <property type="nucleotide sequence ID" value="NC_006155.1"/>
</dbReference>
<dbReference type="SMR" id="Q66FP0"/>
<dbReference type="KEGG" id="ypo:BZ17_2278"/>
<dbReference type="KEGG" id="yps:YPTB0295"/>
<dbReference type="PATRIC" id="fig|273123.14.peg.2409"/>
<dbReference type="Proteomes" id="UP000001011">
    <property type="component" value="Chromosome"/>
</dbReference>
<dbReference type="GO" id="GO:0005737">
    <property type="term" value="C:cytoplasm"/>
    <property type="evidence" value="ECO:0007669"/>
    <property type="project" value="UniProtKB-SubCell"/>
</dbReference>
<dbReference type="GO" id="GO:0043737">
    <property type="term" value="F:deoxyribonuclease V activity"/>
    <property type="evidence" value="ECO:0007669"/>
    <property type="project" value="UniProtKB-UniRule"/>
</dbReference>
<dbReference type="GO" id="GO:0000287">
    <property type="term" value="F:magnesium ion binding"/>
    <property type="evidence" value="ECO:0007669"/>
    <property type="project" value="UniProtKB-UniRule"/>
</dbReference>
<dbReference type="GO" id="GO:0016891">
    <property type="term" value="F:RNA endonuclease activity, producing 5'-phosphomonoesters"/>
    <property type="evidence" value="ECO:0007669"/>
    <property type="project" value="TreeGrafter"/>
</dbReference>
<dbReference type="GO" id="GO:0003727">
    <property type="term" value="F:single-stranded RNA binding"/>
    <property type="evidence" value="ECO:0007669"/>
    <property type="project" value="TreeGrafter"/>
</dbReference>
<dbReference type="GO" id="GO:0006281">
    <property type="term" value="P:DNA repair"/>
    <property type="evidence" value="ECO:0007669"/>
    <property type="project" value="UniProtKB-UniRule"/>
</dbReference>
<dbReference type="CDD" id="cd06559">
    <property type="entry name" value="Endonuclease_V"/>
    <property type="match status" value="1"/>
</dbReference>
<dbReference type="FunFam" id="3.30.2170.10:FF:000001">
    <property type="entry name" value="Endonuclease V"/>
    <property type="match status" value="1"/>
</dbReference>
<dbReference type="Gene3D" id="3.30.2170.10">
    <property type="entry name" value="archaeoglobus fulgidus dsm 4304 superfamily"/>
    <property type="match status" value="1"/>
</dbReference>
<dbReference type="HAMAP" id="MF_00801">
    <property type="entry name" value="Endonuclease_5"/>
    <property type="match status" value="1"/>
</dbReference>
<dbReference type="InterPro" id="IPR007581">
    <property type="entry name" value="Endonuclease-V"/>
</dbReference>
<dbReference type="NCBIfam" id="NF008629">
    <property type="entry name" value="PRK11617.1"/>
    <property type="match status" value="1"/>
</dbReference>
<dbReference type="PANTHER" id="PTHR28511">
    <property type="entry name" value="ENDONUCLEASE V"/>
    <property type="match status" value="1"/>
</dbReference>
<dbReference type="PANTHER" id="PTHR28511:SF1">
    <property type="entry name" value="ENDONUCLEASE V"/>
    <property type="match status" value="1"/>
</dbReference>
<dbReference type="Pfam" id="PF04493">
    <property type="entry name" value="Endonuclease_5"/>
    <property type="match status" value="1"/>
</dbReference>